<reference key="1">
    <citation type="journal article" date="2006" name="Environ. Microbiol.">
        <title>Whole genome analysis of the marine Bacteroidetes'Gramella forsetii' reveals adaptations to degradation of polymeric organic matter.</title>
        <authorList>
            <person name="Bauer M."/>
            <person name="Kube M."/>
            <person name="Teeling H."/>
            <person name="Richter M."/>
            <person name="Lombardot T."/>
            <person name="Allers E."/>
            <person name="Wuerdemann C.A."/>
            <person name="Quast C."/>
            <person name="Kuhl H."/>
            <person name="Knaust F."/>
            <person name="Woebken D."/>
            <person name="Bischof K."/>
            <person name="Mussmann M."/>
            <person name="Choudhuri J.V."/>
            <person name="Meyer F."/>
            <person name="Reinhardt R."/>
            <person name="Amann R.I."/>
            <person name="Gloeckner F.O."/>
        </authorList>
    </citation>
    <scope>NUCLEOTIDE SEQUENCE [LARGE SCALE GENOMIC DNA]</scope>
    <source>
        <strain>DSM 17595 / CGMCC 1.15422 / KT0803</strain>
    </source>
</reference>
<keyword id="KW-0028">Amino-acid biosynthesis</keyword>
<keyword id="KW-0057">Aromatic amino acid biosynthesis</keyword>
<keyword id="KW-0328">Glycosyltransferase</keyword>
<keyword id="KW-0460">Magnesium</keyword>
<keyword id="KW-0479">Metal-binding</keyword>
<keyword id="KW-0808">Transferase</keyword>
<keyword id="KW-0822">Tryptophan biosynthesis</keyword>
<evidence type="ECO:0000255" key="1">
    <source>
        <dbReference type="HAMAP-Rule" id="MF_00211"/>
    </source>
</evidence>
<sequence>MKELLNRLISHETISTDEAKQVIFNISEGKYNDTQIAAFLTVYMMRSITIEELEGFRDALLELCIKVDLSAYNAVDLCGTGGDGKDTFNVSTTSSFVTAGAGVKVAKHGNYGVSSVSGSSNVMEYLGIKFSSDAGFLEKCIDQANICILHAPLFHPAMKNVGPVRKSLAVKTFFNMLGPMVNPAFPKNQLVGVFSLELARMYAYLYQNTDKNYTILHSLDGYDEISLTGETKSISNNSERILKASDFGVSELKQTEIAGGGSVESSAEILTNILKGKGSQAQNNVVCANAGMAIATSRNMSPHEGFAEAKESLESGKAFDSFKKLQKLSQN</sequence>
<feature type="chain" id="PRO_1000099808" description="Anthranilate phosphoribosyltransferase">
    <location>
        <begin position="1"/>
        <end position="331"/>
    </location>
</feature>
<feature type="binding site" evidence="1">
    <location>
        <position position="79"/>
    </location>
    <ligand>
        <name>5-phospho-alpha-D-ribose 1-diphosphate</name>
        <dbReference type="ChEBI" id="CHEBI:58017"/>
    </ligand>
</feature>
<feature type="binding site" evidence="1">
    <location>
        <position position="79"/>
    </location>
    <ligand>
        <name>anthranilate</name>
        <dbReference type="ChEBI" id="CHEBI:16567"/>
        <label>1</label>
    </ligand>
</feature>
<feature type="binding site" evidence="1">
    <location>
        <begin position="82"/>
        <end position="83"/>
    </location>
    <ligand>
        <name>5-phospho-alpha-D-ribose 1-diphosphate</name>
        <dbReference type="ChEBI" id="CHEBI:58017"/>
    </ligand>
</feature>
<feature type="binding site" evidence="1">
    <location>
        <position position="87"/>
    </location>
    <ligand>
        <name>5-phospho-alpha-D-ribose 1-diphosphate</name>
        <dbReference type="ChEBI" id="CHEBI:58017"/>
    </ligand>
</feature>
<feature type="binding site" evidence="1">
    <location>
        <begin position="89"/>
        <end position="92"/>
    </location>
    <ligand>
        <name>5-phospho-alpha-D-ribose 1-diphosphate</name>
        <dbReference type="ChEBI" id="CHEBI:58017"/>
    </ligand>
</feature>
<feature type="binding site" evidence="1">
    <location>
        <position position="91"/>
    </location>
    <ligand>
        <name>Mg(2+)</name>
        <dbReference type="ChEBI" id="CHEBI:18420"/>
        <label>1</label>
    </ligand>
</feature>
<feature type="binding site" evidence="1">
    <location>
        <begin position="107"/>
        <end position="115"/>
    </location>
    <ligand>
        <name>5-phospho-alpha-D-ribose 1-diphosphate</name>
        <dbReference type="ChEBI" id="CHEBI:58017"/>
    </ligand>
</feature>
<feature type="binding site" evidence="1">
    <location>
        <position position="110"/>
    </location>
    <ligand>
        <name>anthranilate</name>
        <dbReference type="ChEBI" id="CHEBI:16567"/>
        <label>1</label>
    </ligand>
</feature>
<feature type="binding site" evidence="1">
    <location>
        <position position="119"/>
    </location>
    <ligand>
        <name>5-phospho-alpha-D-ribose 1-diphosphate</name>
        <dbReference type="ChEBI" id="CHEBI:58017"/>
    </ligand>
</feature>
<feature type="binding site" evidence="1">
    <location>
        <position position="165"/>
    </location>
    <ligand>
        <name>anthranilate</name>
        <dbReference type="ChEBI" id="CHEBI:16567"/>
        <label>2</label>
    </ligand>
</feature>
<feature type="binding site" evidence="1">
    <location>
        <position position="223"/>
    </location>
    <ligand>
        <name>Mg(2+)</name>
        <dbReference type="ChEBI" id="CHEBI:18420"/>
        <label>2</label>
    </ligand>
</feature>
<feature type="binding site" evidence="1">
    <location>
        <position position="224"/>
    </location>
    <ligand>
        <name>Mg(2+)</name>
        <dbReference type="ChEBI" id="CHEBI:18420"/>
        <label>1</label>
    </ligand>
</feature>
<feature type="binding site" evidence="1">
    <location>
        <position position="224"/>
    </location>
    <ligand>
        <name>Mg(2+)</name>
        <dbReference type="ChEBI" id="CHEBI:18420"/>
        <label>2</label>
    </ligand>
</feature>
<organism>
    <name type="scientific">Christiangramia forsetii (strain DSM 17595 / CGMCC 1.15422 / KT0803)</name>
    <name type="common">Gramella forsetii</name>
    <dbReference type="NCBI Taxonomy" id="411154"/>
    <lineage>
        <taxon>Bacteria</taxon>
        <taxon>Pseudomonadati</taxon>
        <taxon>Bacteroidota</taxon>
        <taxon>Flavobacteriia</taxon>
        <taxon>Flavobacteriales</taxon>
        <taxon>Flavobacteriaceae</taxon>
        <taxon>Christiangramia</taxon>
    </lineage>
</organism>
<proteinExistence type="inferred from homology"/>
<protein>
    <recommendedName>
        <fullName evidence="1">Anthranilate phosphoribosyltransferase</fullName>
        <ecNumber evidence="1">2.4.2.18</ecNumber>
    </recommendedName>
</protein>
<accession>A0M4T1</accession>
<name>TRPD_CHRFK</name>
<gene>
    <name evidence="1" type="primary">trpD</name>
    <name type="ordered locus">GFO_2670</name>
</gene>
<comment type="function">
    <text evidence="1">Catalyzes the transfer of the phosphoribosyl group of 5-phosphorylribose-1-pyrophosphate (PRPP) to anthranilate to yield N-(5'-phosphoribosyl)-anthranilate (PRA).</text>
</comment>
<comment type="catalytic activity">
    <reaction evidence="1">
        <text>N-(5-phospho-beta-D-ribosyl)anthranilate + diphosphate = 5-phospho-alpha-D-ribose 1-diphosphate + anthranilate</text>
        <dbReference type="Rhea" id="RHEA:11768"/>
        <dbReference type="ChEBI" id="CHEBI:16567"/>
        <dbReference type="ChEBI" id="CHEBI:18277"/>
        <dbReference type="ChEBI" id="CHEBI:33019"/>
        <dbReference type="ChEBI" id="CHEBI:58017"/>
        <dbReference type="EC" id="2.4.2.18"/>
    </reaction>
</comment>
<comment type="cofactor">
    <cofactor evidence="1">
        <name>Mg(2+)</name>
        <dbReference type="ChEBI" id="CHEBI:18420"/>
    </cofactor>
    <text evidence="1">Binds 2 magnesium ions per monomer.</text>
</comment>
<comment type="pathway">
    <text evidence="1">Amino-acid biosynthesis; L-tryptophan biosynthesis; L-tryptophan from chorismate: step 2/5.</text>
</comment>
<comment type="subunit">
    <text evidence="1">Homodimer.</text>
</comment>
<comment type="similarity">
    <text evidence="1">Belongs to the anthranilate phosphoribosyltransferase family.</text>
</comment>
<dbReference type="EC" id="2.4.2.18" evidence="1"/>
<dbReference type="EMBL" id="CU207366">
    <property type="protein sequence ID" value="CAL67626.1"/>
    <property type="molecule type" value="Genomic_DNA"/>
</dbReference>
<dbReference type="RefSeq" id="WP_011710529.1">
    <property type="nucleotide sequence ID" value="NC_008571.1"/>
</dbReference>
<dbReference type="SMR" id="A0M4T1"/>
<dbReference type="STRING" id="411154.GFO_2670"/>
<dbReference type="KEGG" id="gfo:GFO_2670"/>
<dbReference type="eggNOG" id="COG0547">
    <property type="taxonomic scope" value="Bacteria"/>
</dbReference>
<dbReference type="HOGENOM" id="CLU_034315_3_1_10"/>
<dbReference type="OrthoDB" id="9806430at2"/>
<dbReference type="UniPathway" id="UPA00035">
    <property type="reaction ID" value="UER00041"/>
</dbReference>
<dbReference type="Proteomes" id="UP000000755">
    <property type="component" value="Chromosome"/>
</dbReference>
<dbReference type="GO" id="GO:0005829">
    <property type="term" value="C:cytosol"/>
    <property type="evidence" value="ECO:0007669"/>
    <property type="project" value="TreeGrafter"/>
</dbReference>
<dbReference type="GO" id="GO:0004048">
    <property type="term" value="F:anthranilate phosphoribosyltransferase activity"/>
    <property type="evidence" value="ECO:0007669"/>
    <property type="project" value="UniProtKB-UniRule"/>
</dbReference>
<dbReference type="GO" id="GO:0000287">
    <property type="term" value="F:magnesium ion binding"/>
    <property type="evidence" value="ECO:0007669"/>
    <property type="project" value="UniProtKB-UniRule"/>
</dbReference>
<dbReference type="GO" id="GO:0000162">
    <property type="term" value="P:L-tryptophan biosynthetic process"/>
    <property type="evidence" value="ECO:0007669"/>
    <property type="project" value="UniProtKB-UniRule"/>
</dbReference>
<dbReference type="Gene3D" id="3.40.1030.10">
    <property type="entry name" value="Nucleoside phosphorylase/phosphoribosyltransferase catalytic domain"/>
    <property type="match status" value="1"/>
</dbReference>
<dbReference type="Gene3D" id="1.20.970.10">
    <property type="entry name" value="Transferase, Pyrimidine Nucleoside Phosphorylase, Chain C"/>
    <property type="match status" value="1"/>
</dbReference>
<dbReference type="HAMAP" id="MF_00211">
    <property type="entry name" value="TrpD"/>
    <property type="match status" value="1"/>
</dbReference>
<dbReference type="InterPro" id="IPR005940">
    <property type="entry name" value="Anthranilate_Pribosyl_Tfrase"/>
</dbReference>
<dbReference type="InterPro" id="IPR000312">
    <property type="entry name" value="Glycosyl_Trfase_fam3"/>
</dbReference>
<dbReference type="InterPro" id="IPR017459">
    <property type="entry name" value="Glycosyl_Trfase_fam3_N_dom"/>
</dbReference>
<dbReference type="InterPro" id="IPR036320">
    <property type="entry name" value="Glycosyl_Trfase_fam3_N_dom_sf"/>
</dbReference>
<dbReference type="InterPro" id="IPR035902">
    <property type="entry name" value="Nuc_phospho_transferase"/>
</dbReference>
<dbReference type="NCBIfam" id="TIGR01245">
    <property type="entry name" value="trpD"/>
    <property type="match status" value="1"/>
</dbReference>
<dbReference type="PANTHER" id="PTHR43285">
    <property type="entry name" value="ANTHRANILATE PHOSPHORIBOSYLTRANSFERASE"/>
    <property type="match status" value="1"/>
</dbReference>
<dbReference type="PANTHER" id="PTHR43285:SF2">
    <property type="entry name" value="ANTHRANILATE PHOSPHORIBOSYLTRANSFERASE"/>
    <property type="match status" value="1"/>
</dbReference>
<dbReference type="Pfam" id="PF02885">
    <property type="entry name" value="Glycos_trans_3N"/>
    <property type="match status" value="1"/>
</dbReference>
<dbReference type="Pfam" id="PF00591">
    <property type="entry name" value="Glycos_transf_3"/>
    <property type="match status" value="1"/>
</dbReference>
<dbReference type="SUPFAM" id="SSF52418">
    <property type="entry name" value="Nucleoside phosphorylase/phosphoribosyltransferase catalytic domain"/>
    <property type="match status" value="1"/>
</dbReference>
<dbReference type="SUPFAM" id="SSF47648">
    <property type="entry name" value="Nucleoside phosphorylase/phosphoribosyltransferase N-terminal domain"/>
    <property type="match status" value="1"/>
</dbReference>